<comment type="function">
    <text evidence="1">Catalyzes the conversion of 3-deoxy-D-arabino-heptulosonate 7-phosphate (DAHP) to dehydroquinate (DHQ).</text>
</comment>
<comment type="catalytic activity">
    <reaction evidence="1">
        <text>7-phospho-2-dehydro-3-deoxy-D-arabino-heptonate = 3-dehydroquinate + phosphate</text>
        <dbReference type="Rhea" id="RHEA:21968"/>
        <dbReference type="ChEBI" id="CHEBI:32364"/>
        <dbReference type="ChEBI" id="CHEBI:43474"/>
        <dbReference type="ChEBI" id="CHEBI:58394"/>
        <dbReference type="EC" id="4.2.3.4"/>
    </reaction>
</comment>
<comment type="cofactor">
    <cofactor evidence="1">
        <name>Co(2+)</name>
        <dbReference type="ChEBI" id="CHEBI:48828"/>
    </cofactor>
    <cofactor evidence="1">
        <name>Zn(2+)</name>
        <dbReference type="ChEBI" id="CHEBI:29105"/>
    </cofactor>
    <text evidence="1">Binds 1 divalent metal cation per subunit. Can use either Co(2+) or Zn(2+).</text>
</comment>
<comment type="cofactor">
    <cofactor evidence="1">
        <name>NAD(+)</name>
        <dbReference type="ChEBI" id="CHEBI:57540"/>
    </cofactor>
</comment>
<comment type="pathway">
    <text evidence="1">Metabolic intermediate biosynthesis; chorismate biosynthesis; chorismate from D-erythrose 4-phosphate and phosphoenolpyruvate: step 2/7.</text>
</comment>
<comment type="subcellular location">
    <subcellularLocation>
        <location evidence="1">Cytoplasm</location>
    </subcellularLocation>
</comment>
<comment type="similarity">
    <text evidence="1">Belongs to the sugar phosphate cyclases superfamily. Dehydroquinate synthase family.</text>
</comment>
<feature type="chain" id="PRO_1000119092" description="3-dehydroquinate synthase">
    <location>
        <begin position="1"/>
        <end position="360"/>
    </location>
</feature>
<feature type="binding site" evidence="1">
    <location>
        <begin position="104"/>
        <end position="108"/>
    </location>
    <ligand>
        <name>NAD(+)</name>
        <dbReference type="ChEBI" id="CHEBI:57540"/>
    </ligand>
</feature>
<feature type="binding site" evidence="1">
    <location>
        <begin position="128"/>
        <end position="129"/>
    </location>
    <ligand>
        <name>NAD(+)</name>
        <dbReference type="ChEBI" id="CHEBI:57540"/>
    </ligand>
</feature>
<feature type="binding site" evidence="1">
    <location>
        <position position="141"/>
    </location>
    <ligand>
        <name>NAD(+)</name>
        <dbReference type="ChEBI" id="CHEBI:57540"/>
    </ligand>
</feature>
<feature type="binding site" evidence="1">
    <location>
        <begin position="168"/>
        <end position="171"/>
    </location>
    <ligand>
        <name>NAD(+)</name>
        <dbReference type="ChEBI" id="CHEBI:57540"/>
    </ligand>
</feature>
<feature type="binding site" evidence="1">
    <location>
        <position position="183"/>
    </location>
    <ligand>
        <name>Zn(2+)</name>
        <dbReference type="ChEBI" id="CHEBI:29105"/>
    </ligand>
</feature>
<feature type="binding site" evidence="1">
    <location>
        <position position="243"/>
    </location>
    <ligand>
        <name>Zn(2+)</name>
        <dbReference type="ChEBI" id="CHEBI:29105"/>
    </ligand>
</feature>
<feature type="binding site" evidence="1">
    <location>
        <position position="260"/>
    </location>
    <ligand>
        <name>Zn(2+)</name>
        <dbReference type="ChEBI" id="CHEBI:29105"/>
    </ligand>
</feature>
<gene>
    <name evidence="1" type="primary">aroB</name>
    <name type="ordered locus">SEQ_1679</name>
</gene>
<dbReference type="EC" id="4.2.3.4" evidence="1"/>
<dbReference type="EMBL" id="FM204883">
    <property type="protein sequence ID" value="CAW94722.1"/>
    <property type="molecule type" value="Genomic_DNA"/>
</dbReference>
<dbReference type="RefSeq" id="WP_012679919.1">
    <property type="nucleotide sequence ID" value="NC_012471.1"/>
</dbReference>
<dbReference type="SMR" id="C0MC29"/>
<dbReference type="KEGG" id="seu:SEQ_1679"/>
<dbReference type="HOGENOM" id="CLU_001201_0_1_9"/>
<dbReference type="OrthoDB" id="9806583at2"/>
<dbReference type="UniPathway" id="UPA00053">
    <property type="reaction ID" value="UER00085"/>
</dbReference>
<dbReference type="Proteomes" id="UP000001365">
    <property type="component" value="Chromosome"/>
</dbReference>
<dbReference type="GO" id="GO:0005737">
    <property type="term" value="C:cytoplasm"/>
    <property type="evidence" value="ECO:0007669"/>
    <property type="project" value="UniProtKB-SubCell"/>
</dbReference>
<dbReference type="GO" id="GO:0003856">
    <property type="term" value="F:3-dehydroquinate synthase activity"/>
    <property type="evidence" value="ECO:0007669"/>
    <property type="project" value="UniProtKB-UniRule"/>
</dbReference>
<dbReference type="GO" id="GO:0046872">
    <property type="term" value="F:metal ion binding"/>
    <property type="evidence" value="ECO:0007669"/>
    <property type="project" value="UniProtKB-KW"/>
</dbReference>
<dbReference type="GO" id="GO:0000166">
    <property type="term" value="F:nucleotide binding"/>
    <property type="evidence" value="ECO:0007669"/>
    <property type="project" value="UniProtKB-KW"/>
</dbReference>
<dbReference type="GO" id="GO:0008652">
    <property type="term" value="P:amino acid biosynthetic process"/>
    <property type="evidence" value="ECO:0007669"/>
    <property type="project" value="UniProtKB-KW"/>
</dbReference>
<dbReference type="GO" id="GO:0009073">
    <property type="term" value="P:aromatic amino acid family biosynthetic process"/>
    <property type="evidence" value="ECO:0007669"/>
    <property type="project" value="UniProtKB-KW"/>
</dbReference>
<dbReference type="GO" id="GO:0009423">
    <property type="term" value="P:chorismate biosynthetic process"/>
    <property type="evidence" value="ECO:0007669"/>
    <property type="project" value="UniProtKB-UniRule"/>
</dbReference>
<dbReference type="CDD" id="cd08195">
    <property type="entry name" value="DHQS"/>
    <property type="match status" value="1"/>
</dbReference>
<dbReference type="FunFam" id="3.40.50.1970:FF:000007">
    <property type="entry name" value="Pentafunctional AROM polypeptide"/>
    <property type="match status" value="1"/>
</dbReference>
<dbReference type="Gene3D" id="3.40.50.1970">
    <property type="match status" value="1"/>
</dbReference>
<dbReference type="Gene3D" id="1.20.1090.10">
    <property type="entry name" value="Dehydroquinate synthase-like - alpha domain"/>
    <property type="match status" value="1"/>
</dbReference>
<dbReference type="HAMAP" id="MF_00110">
    <property type="entry name" value="DHQ_synthase"/>
    <property type="match status" value="1"/>
</dbReference>
<dbReference type="InterPro" id="IPR050071">
    <property type="entry name" value="Dehydroquinate_synthase"/>
</dbReference>
<dbReference type="InterPro" id="IPR016037">
    <property type="entry name" value="DHQ_synth_AroB"/>
</dbReference>
<dbReference type="InterPro" id="IPR030963">
    <property type="entry name" value="DHQ_synth_fam"/>
</dbReference>
<dbReference type="InterPro" id="IPR030960">
    <property type="entry name" value="DHQS/DOIS_N"/>
</dbReference>
<dbReference type="InterPro" id="IPR056179">
    <property type="entry name" value="DHQS_C"/>
</dbReference>
<dbReference type="NCBIfam" id="TIGR01357">
    <property type="entry name" value="aroB"/>
    <property type="match status" value="1"/>
</dbReference>
<dbReference type="PANTHER" id="PTHR43622">
    <property type="entry name" value="3-DEHYDROQUINATE SYNTHASE"/>
    <property type="match status" value="1"/>
</dbReference>
<dbReference type="PANTHER" id="PTHR43622:SF1">
    <property type="entry name" value="3-DEHYDROQUINATE SYNTHASE"/>
    <property type="match status" value="1"/>
</dbReference>
<dbReference type="Pfam" id="PF01761">
    <property type="entry name" value="DHQ_synthase"/>
    <property type="match status" value="1"/>
</dbReference>
<dbReference type="Pfam" id="PF24621">
    <property type="entry name" value="DHQS_C"/>
    <property type="match status" value="1"/>
</dbReference>
<dbReference type="PIRSF" id="PIRSF001455">
    <property type="entry name" value="DHQ_synth"/>
    <property type="match status" value="1"/>
</dbReference>
<dbReference type="SUPFAM" id="SSF56796">
    <property type="entry name" value="Dehydroquinate synthase-like"/>
    <property type="match status" value="1"/>
</dbReference>
<organism>
    <name type="scientific">Streptococcus equi subsp. equi (strain 4047)</name>
    <dbReference type="NCBI Taxonomy" id="553482"/>
    <lineage>
        <taxon>Bacteria</taxon>
        <taxon>Bacillati</taxon>
        <taxon>Bacillota</taxon>
        <taxon>Bacilli</taxon>
        <taxon>Lactobacillales</taxon>
        <taxon>Streptococcaceae</taxon>
        <taxon>Streptococcus</taxon>
    </lineage>
</organism>
<accession>C0MC29</accession>
<reference key="1">
    <citation type="journal article" date="2009" name="PLoS Pathog.">
        <title>Genomic evidence for the evolution of Streptococcus equi: host restriction, increased virulence, and genetic exchange with human pathogens.</title>
        <authorList>
            <person name="Holden M.T.G."/>
            <person name="Heather Z."/>
            <person name="Paillot R."/>
            <person name="Steward K.F."/>
            <person name="Webb K."/>
            <person name="Ainslie F."/>
            <person name="Jourdan T."/>
            <person name="Bason N.C."/>
            <person name="Holroyd N.E."/>
            <person name="Mungall K."/>
            <person name="Quail M.A."/>
            <person name="Sanders M."/>
            <person name="Simmonds M."/>
            <person name="Willey D."/>
            <person name="Brooks K."/>
            <person name="Aanensen D.M."/>
            <person name="Spratt B.G."/>
            <person name="Jolley K.A."/>
            <person name="Maiden M.C.J."/>
            <person name="Kehoe M."/>
            <person name="Chanter N."/>
            <person name="Bentley S.D."/>
            <person name="Robinson C."/>
            <person name="Maskell D.J."/>
            <person name="Parkhill J."/>
            <person name="Waller A.S."/>
        </authorList>
    </citation>
    <scope>NUCLEOTIDE SEQUENCE [LARGE SCALE GENOMIC DNA]</scope>
    <source>
        <strain>4047</strain>
    </source>
</reference>
<proteinExistence type="inferred from homology"/>
<name>AROB_STRE4</name>
<keyword id="KW-0028">Amino-acid biosynthesis</keyword>
<keyword id="KW-0057">Aromatic amino acid biosynthesis</keyword>
<keyword id="KW-0170">Cobalt</keyword>
<keyword id="KW-0963">Cytoplasm</keyword>
<keyword id="KW-0456">Lyase</keyword>
<keyword id="KW-0479">Metal-binding</keyword>
<keyword id="KW-0520">NAD</keyword>
<keyword id="KW-0547">Nucleotide-binding</keyword>
<keyword id="KW-0862">Zinc</keyword>
<protein>
    <recommendedName>
        <fullName evidence="1">3-dehydroquinate synthase</fullName>
        <shortName evidence="1">DHQS</shortName>
        <ecNumber evidence="1">4.2.3.4</ecNumber>
    </recommendedName>
</protein>
<sequence length="360" mass="40603">MTQTLQVKSRINDYPIIFTDDIFQPLNQFLAEKGDVKLLFITDQTVFDLYQPLFRRFQQDYDSYLHIAAPGGQSKSLEEVSRIYDRLIRANFSKKDVIVTVGGGVIGDLGGFVAATFYRGISYVQIPTTLLSQVDSSIGGKVGVHFKGLTNMIGSIYPPNQIIVSAKFLDTLSEREFACGISEMIKIGFIHDRKLFQQLLAFPKDRNQEQLRQMIFQAICHKKRVVEKDEFEGNLRMSLNFGHTLGHAIEALCHHELYRHGEAIAIGMVFEAKLAVQQQLLSQQDLEALQAAFEAYQLPTTLEAKSMTAEALMTVLKTDKKNSGQHIVLILPTTKGYVSFPIAKHDSRLLDWLRSLLDIA</sequence>
<evidence type="ECO:0000255" key="1">
    <source>
        <dbReference type="HAMAP-Rule" id="MF_00110"/>
    </source>
</evidence>